<dbReference type="EC" id="3.4.16.6"/>
<dbReference type="EMBL" id="CH408080">
    <property type="protein sequence ID" value="EEQ40314.1"/>
    <property type="molecule type" value="Genomic_DNA"/>
</dbReference>
<dbReference type="RefSeq" id="XP_002615560.1">
    <property type="nucleotide sequence ID" value="XM_002615514.1"/>
</dbReference>
<dbReference type="SMR" id="C4Y8B4"/>
<dbReference type="FunCoup" id="C4Y8B4">
    <property type="interactions" value="112"/>
</dbReference>
<dbReference type="STRING" id="306902.C4Y8B4"/>
<dbReference type="ESTHER" id="clal4-kex1">
    <property type="family name" value="Carboxypeptidase_S10"/>
</dbReference>
<dbReference type="MEROPS" id="S10.007"/>
<dbReference type="GlyCosmos" id="C4Y8B4">
    <property type="glycosylation" value="4 sites, No reported glycans"/>
</dbReference>
<dbReference type="GeneID" id="8496178"/>
<dbReference type="KEGG" id="clu:CLUG_04442"/>
<dbReference type="VEuPathDB" id="FungiDB:CLUG_04442"/>
<dbReference type="HOGENOM" id="CLU_008523_11_2_1"/>
<dbReference type="InParanoid" id="C4Y8B4"/>
<dbReference type="OMA" id="PLMFAGQ"/>
<dbReference type="OrthoDB" id="3167at4891"/>
<dbReference type="Proteomes" id="UP000007703">
    <property type="component" value="Unassembled WGS sequence"/>
</dbReference>
<dbReference type="GO" id="GO:0016020">
    <property type="term" value="C:membrane"/>
    <property type="evidence" value="ECO:0007669"/>
    <property type="project" value="UniProtKB-KW"/>
</dbReference>
<dbReference type="GO" id="GO:0005802">
    <property type="term" value="C:trans-Golgi network"/>
    <property type="evidence" value="ECO:0007669"/>
    <property type="project" value="TreeGrafter"/>
</dbReference>
<dbReference type="GO" id="GO:0004185">
    <property type="term" value="F:serine-type carboxypeptidase activity"/>
    <property type="evidence" value="ECO:0007669"/>
    <property type="project" value="UniProtKB-EC"/>
</dbReference>
<dbReference type="GO" id="GO:0006915">
    <property type="term" value="P:apoptotic process"/>
    <property type="evidence" value="ECO:0007669"/>
    <property type="project" value="UniProtKB-KW"/>
</dbReference>
<dbReference type="GO" id="GO:0006508">
    <property type="term" value="P:proteolysis"/>
    <property type="evidence" value="ECO:0007669"/>
    <property type="project" value="UniProtKB-KW"/>
</dbReference>
<dbReference type="Gene3D" id="3.40.50.1820">
    <property type="entry name" value="alpha/beta hydrolase"/>
    <property type="match status" value="1"/>
</dbReference>
<dbReference type="InterPro" id="IPR029058">
    <property type="entry name" value="AB_hydrolase_fold"/>
</dbReference>
<dbReference type="InterPro" id="IPR001563">
    <property type="entry name" value="Peptidase_S10"/>
</dbReference>
<dbReference type="InterPro" id="IPR033124">
    <property type="entry name" value="Ser_caboxypep_his_AS"/>
</dbReference>
<dbReference type="InterPro" id="IPR018202">
    <property type="entry name" value="Ser_caboxypep_ser_AS"/>
</dbReference>
<dbReference type="PANTHER" id="PTHR11802:SF190">
    <property type="entry name" value="PHEROMONE-PROCESSING CARBOXYPEPTIDASE KEX1"/>
    <property type="match status" value="1"/>
</dbReference>
<dbReference type="PANTHER" id="PTHR11802">
    <property type="entry name" value="SERINE PROTEASE FAMILY S10 SERINE CARBOXYPEPTIDASE"/>
    <property type="match status" value="1"/>
</dbReference>
<dbReference type="Pfam" id="PF00450">
    <property type="entry name" value="Peptidase_S10"/>
    <property type="match status" value="1"/>
</dbReference>
<dbReference type="PRINTS" id="PR00724">
    <property type="entry name" value="CRBOXYPTASEC"/>
</dbReference>
<dbReference type="SUPFAM" id="SSF53474">
    <property type="entry name" value="alpha/beta-Hydrolases"/>
    <property type="match status" value="1"/>
</dbReference>
<dbReference type="PROSITE" id="PS00560">
    <property type="entry name" value="CARBOXYPEPT_SER_HIS"/>
    <property type="match status" value="1"/>
</dbReference>
<dbReference type="PROSITE" id="PS00131">
    <property type="entry name" value="CARBOXYPEPT_SER_SER"/>
    <property type="match status" value="1"/>
</dbReference>
<organism>
    <name type="scientific">Clavispora lusitaniae (strain ATCC 42720)</name>
    <name type="common">Yeast</name>
    <name type="synonym">Candida lusitaniae</name>
    <dbReference type="NCBI Taxonomy" id="306902"/>
    <lineage>
        <taxon>Eukaryota</taxon>
        <taxon>Fungi</taxon>
        <taxon>Dikarya</taxon>
        <taxon>Ascomycota</taxon>
        <taxon>Saccharomycotina</taxon>
        <taxon>Pichiomycetes</taxon>
        <taxon>Metschnikowiaceae</taxon>
        <taxon>Clavispora</taxon>
    </lineage>
</organism>
<feature type="signal peptide" evidence="2">
    <location>
        <begin position="1"/>
        <end position="18"/>
    </location>
</feature>
<feature type="chain" id="PRO_0000411913" description="Pheromone-processing carboxypeptidase KEX1">
    <location>
        <begin position="19"/>
        <end position="654"/>
    </location>
</feature>
<feature type="topological domain" description="Lumenal" evidence="2">
    <location>
        <begin position="19"/>
        <end position="533"/>
    </location>
</feature>
<feature type="transmembrane region" description="Helical" evidence="2">
    <location>
        <begin position="534"/>
        <end position="554"/>
    </location>
</feature>
<feature type="topological domain" description="Cytoplasmic" evidence="2">
    <location>
        <begin position="555"/>
        <end position="654"/>
    </location>
</feature>
<feature type="region of interest" description="Disordered" evidence="3">
    <location>
        <begin position="484"/>
        <end position="526"/>
    </location>
</feature>
<feature type="region of interest" description="Disordered" evidence="3">
    <location>
        <begin position="606"/>
        <end position="654"/>
    </location>
</feature>
<feature type="compositionally biased region" description="Polar residues" evidence="3">
    <location>
        <begin position="484"/>
        <end position="500"/>
    </location>
</feature>
<feature type="compositionally biased region" description="Low complexity" evidence="3">
    <location>
        <begin position="508"/>
        <end position="523"/>
    </location>
</feature>
<feature type="compositionally biased region" description="Polar residues" evidence="3">
    <location>
        <begin position="622"/>
        <end position="631"/>
    </location>
</feature>
<feature type="active site" evidence="1">
    <location>
        <position position="188"/>
    </location>
</feature>
<feature type="active site" evidence="1">
    <location>
        <position position="395"/>
    </location>
</feature>
<feature type="active site" evidence="1">
    <location>
        <position position="453"/>
    </location>
</feature>
<feature type="glycosylation site" description="N-linked (GlcNAc...) asparagine" evidence="2">
    <location>
        <position position="69"/>
    </location>
</feature>
<feature type="glycosylation site" description="N-linked (GlcNAc...) asparagine" evidence="2">
    <location>
        <position position="89"/>
    </location>
</feature>
<feature type="glycosylation site" description="N-linked (GlcNAc...) asparagine" evidence="2">
    <location>
        <position position="442"/>
    </location>
</feature>
<feature type="glycosylation site" description="N-linked (GlcNAc...) asparagine" evidence="2">
    <location>
        <position position="503"/>
    </location>
</feature>
<keyword id="KW-0053">Apoptosis</keyword>
<keyword id="KW-0121">Carboxypeptidase</keyword>
<keyword id="KW-0325">Glycoprotein</keyword>
<keyword id="KW-0333">Golgi apparatus</keyword>
<keyword id="KW-0378">Hydrolase</keyword>
<keyword id="KW-0472">Membrane</keyword>
<keyword id="KW-0645">Protease</keyword>
<keyword id="KW-1185">Reference proteome</keyword>
<keyword id="KW-0732">Signal</keyword>
<keyword id="KW-0812">Transmembrane</keyword>
<keyword id="KW-1133">Transmembrane helix</keyword>
<accession>C4Y8B4</accession>
<proteinExistence type="inferred from homology"/>
<comment type="function">
    <text evidence="1">Protease with a carboxypeptidase B-like function involved in the C-terminal processing of the lysine and arginine residues from protein precursors. Promotes cell fusion and is involved in the programmed cell death (By similarity).</text>
</comment>
<comment type="catalytic activity">
    <reaction>
        <text>Preferential release of a C-terminal arginine or lysine residue.</text>
        <dbReference type="EC" id="3.4.16.6"/>
    </reaction>
</comment>
<comment type="subcellular location">
    <subcellularLocation>
        <location evidence="1">Golgi apparatus</location>
        <location evidence="1">trans-Golgi network membrane</location>
        <topology evidence="1">Single-pass type I membrane protein</topology>
    </subcellularLocation>
</comment>
<comment type="similarity">
    <text evidence="4">Belongs to the peptidase S10 family.</text>
</comment>
<reference key="1">
    <citation type="journal article" date="2009" name="Nature">
        <title>Evolution of pathogenicity and sexual reproduction in eight Candida genomes.</title>
        <authorList>
            <person name="Butler G."/>
            <person name="Rasmussen M.D."/>
            <person name="Lin M.F."/>
            <person name="Santos M.A.S."/>
            <person name="Sakthikumar S."/>
            <person name="Munro C.A."/>
            <person name="Rheinbay E."/>
            <person name="Grabherr M."/>
            <person name="Forche A."/>
            <person name="Reedy J.L."/>
            <person name="Agrafioti I."/>
            <person name="Arnaud M.B."/>
            <person name="Bates S."/>
            <person name="Brown A.J.P."/>
            <person name="Brunke S."/>
            <person name="Costanzo M.C."/>
            <person name="Fitzpatrick D.A."/>
            <person name="de Groot P.W.J."/>
            <person name="Harris D."/>
            <person name="Hoyer L.L."/>
            <person name="Hube B."/>
            <person name="Klis F.M."/>
            <person name="Kodira C."/>
            <person name="Lennard N."/>
            <person name="Logue M.E."/>
            <person name="Martin R."/>
            <person name="Neiman A.M."/>
            <person name="Nikolaou E."/>
            <person name="Quail M.A."/>
            <person name="Quinn J."/>
            <person name="Santos M.C."/>
            <person name="Schmitzberger F.F."/>
            <person name="Sherlock G."/>
            <person name="Shah P."/>
            <person name="Silverstein K.A.T."/>
            <person name="Skrzypek M.S."/>
            <person name="Soll D."/>
            <person name="Staggs R."/>
            <person name="Stansfield I."/>
            <person name="Stumpf M.P.H."/>
            <person name="Sudbery P.E."/>
            <person name="Srikantha T."/>
            <person name="Zeng Q."/>
            <person name="Berman J."/>
            <person name="Berriman M."/>
            <person name="Heitman J."/>
            <person name="Gow N.A.R."/>
            <person name="Lorenz M.C."/>
            <person name="Birren B.W."/>
            <person name="Kellis M."/>
            <person name="Cuomo C.A."/>
        </authorList>
    </citation>
    <scope>NUCLEOTIDE SEQUENCE [LARGE SCALE GENOMIC DNA]</scope>
    <source>
        <strain>ATCC 42720</strain>
    </source>
</reference>
<protein>
    <recommendedName>
        <fullName>Pheromone-processing carboxypeptidase KEX1</fullName>
        <ecNumber>3.4.16.6</ecNumber>
    </recommendedName>
    <alternativeName>
        <fullName>Carboxypeptidase D</fullName>
    </alternativeName>
</protein>
<sequence length="654" mass="73168">MIVRLFWLAVLWLALANANPLKRLNHVWSQRGVAKDDFLVTSLPGLSENIASDDVPLMFAGQLELYPENNTHYFFWKFSDQKKEPEAANRTIFWLNGGPGCSSMDGALMEAGPLRIGKDYKVQLNEGSWHRKGDVVFVDQPAGTGFSYSRDYDVELYQIEYHFLQFLKKYFELFPEDAHNDIVLAGESYAGQYIPYIAHGILERNKKLADGESPYHLKGLAIGNGWISPNEQSLSFVPFAVQAGLVSQKDPGWKAILQQHMKCQDLVAASHEDDTFGANSVVDKECEKVLNTILYELVDHSASQYEQCINMYDYTLRDSFPSCGMNWPPDLSNVNHFLKSDEVMSSLNLVQQISWTECSEHVGKQMKARHSKPAITLFADLLAEVEILLFHGNRDIICNYMGAESMIKKLHWGGQTGFSADSPVLKWFHGDEEAGYVKSERNLTFVNVFDASHMVPFDKPEVSSALVDILFKRFTVADDKLQTQAKKTNANQNDSPSASENDNESGRTSESASSSPSESAATETESHATRIVRLIQLAVIIILIWGLCAIYSTYRSKPTSIIKTKPSGRKKNVQWADLMPQEEPAPKGFLSKTLNKLSRTEHKYVPVDIELGPTDGMDDASSDSGPSNVGTAETPEFVIASDDEENAHEHTEEH</sequence>
<evidence type="ECO:0000250" key="1"/>
<evidence type="ECO:0000255" key="2"/>
<evidence type="ECO:0000256" key="3">
    <source>
        <dbReference type="SAM" id="MobiDB-lite"/>
    </source>
</evidence>
<evidence type="ECO:0000305" key="4"/>
<gene>
    <name type="primary">KEX1</name>
    <name type="ORF">CLUG_04442</name>
</gene>
<name>KEX1_CLAL4</name>